<proteinExistence type="evidence at protein level"/>
<reference key="1">
    <citation type="journal article" date="1997" name="Nature">
        <title>The nucleotide sequence of Saccharomyces cerevisiae chromosome XVI.</title>
        <authorList>
            <person name="Bussey H."/>
            <person name="Storms R.K."/>
            <person name="Ahmed A."/>
            <person name="Albermann K."/>
            <person name="Allen E."/>
            <person name="Ansorge W."/>
            <person name="Araujo R."/>
            <person name="Aparicio A."/>
            <person name="Barrell B.G."/>
            <person name="Badcock K."/>
            <person name="Benes V."/>
            <person name="Botstein D."/>
            <person name="Bowman S."/>
            <person name="Brueckner M."/>
            <person name="Carpenter J."/>
            <person name="Cherry J.M."/>
            <person name="Chung E."/>
            <person name="Churcher C.M."/>
            <person name="Coster F."/>
            <person name="Davis K."/>
            <person name="Davis R.W."/>
            <person name="Dietrich F.S."/>
            <person name="Delius H."/>
            <person name="DiPaolo T."/>
            <person name="Dubois E."/>
            <person name="Duesterhoeft A."/>
            <person name="Duncan M."/>
            <person name="Floeth M."/>
            <person name="Fortin N."/>
            <person name="Friesen J.D."/>
            <person name="Fritz C."/>
            <person name="Goffeau A."/>
            <person name="Hall J."/>
            <person name="Hebling U."/>
            <person name="Heumann K."/>
            <person name="Hilbert H."/>
            <person name="Hillier L.W."/>
            <person name="Hunicke-Smith S."/>
            <person name="Hyman R.W."/>
            <person name="Johnston M."/>
            <person name="Kalman S."/>
            <person name="Kleine K."/>
            <person name="Komp C."/>
            <person name="Kurdi O."/>
            <person name="Lashkari D."/>
            <person name="Lew H."/>
            <person name="Lin A."/>
            <person name="Lin D."/>
            <person name="Louis E.J."/>
            <person name="Marathe R."/>
            <person name="Messenguy F."/>
            <person name="Mewes H.-W."/>
            <person name="Mirtipati S."/>
            <person name="Moestl D."/>
            <person name="Mueller-Auer S."/>
            <person name="Namath A."/>
            <person name="Nentwich U."/>
            <person name="Oefner P."/>
            <person name="Pearson D."/>
            <person name="Petel F.X."/>
            <person name="Pohl T.M."/>
            <person name="Purnelle B."/>
            <person name="Rajandream M.A."/>
            <person name="Rechmann S."/>
            <person name="Rieger M."/>
            <person name="Riles L."/>
            <person name="Roberts D."/>
            <person name="Schaefer M."/>
            <person name="Scharfe M."/>
            <person name="Scherens B."/>
            <person name="Schramm S."/>
            <person name="Schroeder M."/>
            <person name="Sdicu A.-M."/>
            <person name="Tettelin H."/>
            <person name="Urrestarazu L.A."/>
            <person name="Ushinsky S."/>
            <person name="Vierendeels F."/>
            <person name="Vissers S."/>
            <person name="Voss H."/>
            <person name="Walsh S.V."/>
            <person name="Wambutt R."/>
            <person name="Wang Y."/>
            <person name="Wedler E."/>
            <person name="Wedler H."/>
            <person name="Winnett E."/>
            <person name="Zhong W.-W."/>
            <person name="Zollner A."/>
            <person name="Vo D.H."/>
            <person name="Hani J."/>
        </authorList>
    </citation>
    <scope>NUCLEOTIDE SEQUENCE [LARGE SCALE GENOMIC DNA]</scope>
    <source>
        <strain>ATCC 204508 / S288c</strain>
    </source>
</reference>
<reference key="2">
    <citation type="journal article" date="2014" name="G3 (Bethesda)">
        <title>The reference genome sequence of Saccharomyces cerevisiae: Then and now.</title>
        <authorList>
            <person name="Engel S.R."/>
            <person name="Dietrich F.S."/>
            <person name="Fisk D.G."/>
            <person name="Binkley G."/>
            <person name="Balakrishnan R."/>
            <person name="Costanzo M.C."/>
            <person name="Dwight S.S."/>
            <person name="Hitz B.C."/>
            <person name="Karra K."/>
            <person name="Nash R.S."/>
            <person name="Weng S."/>
            <person name="Wong E.D."/>
            <person name="Lloyd P."/>
            <person name="Skrzypek M.S."/>
            <person name="Miyasato S.R."/>
            <person name="Simison M."/>
            <person name="Cherry J.M."/>
        </authorList>
    </citation>
    <scope>GENOME REANNOTATION</scope>
    <source>
        <strain>ATCC 204508 / S288c</strain>
    </source>
</reference>
<reference key="3">
    <citation type="journal article" date="2003" name="Nature">
        <title>Global analysis of protein localization in budding yeast.</title>
        <authorList>
            <person name="Huh W.-K."/>
            <person name="Falvo J.V."/>
            <person name="Gerke L.C."/>
            <person name="Carroll A.S."/>
            <person name="Howson R.W."/>
            <person name="Weissman J.S."/>
            <person name="O'Shea E.K."/>
        </authorList>
    </citation>
    <scope>SUBCELLULAR LOCATION [LARGE SCALE ANALYSIS]</scope>
</reference>
<reference key="4">
    <citation type="journal article" date="2003" name="Nature">
        <title>Global analysis of protein expression in yeast.</title>
        <authorList>
            <person name="Ghaemmaghami S."/>
            <person name="Huh W.-K."/>
            <person name="Bower K."/>
            <person name="Howson R.W."/>
            <person name="Belle A."/>
            <person name="Dephoure N."/>
            <person name="O'Shea E.K."/>
            <person name="Weissman J.S."/>
        </authorList>
    </citation>
    <scope>LEVEL OF PROTEIN EXPRESSION [LARGE SCALE ANALYSIS]</scope>
</reference>
<reference key="5">
    <citation type="journal article" date="2007" name="J. Proteome Res.">
        <title>Large-scale phosphorylation analysis of alpha-factor-arrested Saccharomyces cerevisiae.</title>
        <authorList>
            <person name="Li X."/>
            <person name="Gerber S.A."/>
            <person name="Rudner A.D."/>
            <person name="Beausoleil S.A."/>
            <person name="Haas W."/>
            <person name="Villen J."/>
            <person name="Elias J.E."/>
            <person name="Gygi S.P."/>
        </authorList>
    </citation>
    <scope>PHOSPHORYLATION [LARGE SCALE ANALYSIS] AT SER-65</scope>
    <scope>IDENTIFICATION BY MASS SPECTROMETRY [LARGE SCALE ANALYSIS]</scope>
    <source>
        <strain>ADR376</strain>
    </source>
</reference>
<reference key="6">
    <citation type="journal article" date="2008" name="Mol. Cell. Proteomics">
        <title>A multidimensional chromatography technology for in-depth phosphoproteome analysis.</title>
        <authorList>
            <person name="Albuquerque C.P."/>
            <person name="Smolka M.B."/>
            <person name="Payne S.H."/>
            <person name="Bafna V."/>
            <person name="Eng J."/>
            <person name="Zhou H."/>
        </authorList>
    </citation>
    <scope>PHOSPHORYLATION [LARGE SCALE ANALYSIS] AT SER-47 AND SER-65</scope>
    <scope>IDENTIFICATION BY MASS SPECTROMETRY [LARGE SCALE ANALYSIS]</scope>
</reference>
<reference key="7">
    <citation type="journal article" date="2009" name="Science">
        <title>Global analysis of Cdk1 substrate phosphorylation sites provides insights into evolution.</title>
        <authorList>
            <person name="Holt L.J."/>
            <person name="Tuch B.B."/>
            <person name="Villen J."/>
            <person name="Johnson A.D."/>
            <person name="Gygi S.P."/>
            <person name="Morgan D.O."/>
        </authorList>
    </citation>
    <scope>PHOSPHORYLATION [LARGE SCALE ANALYSIS] AT SER-65</scope>
    <scope>IDENTIFICATION BY MASS SPECTROMETRY [LARGE SCALE ANALYSIS]</scope>
</reference>
<protein>
    <recommendedName>
        <fullName>WD repeat-containing protein YPL247C</fullName>
    </recommendedName>
</protein>
<gene>
    <name type="ordered locus">YPL247C</name>
</gene>
<sequence length="523" mass="57324">MDPFHNGNKRSSISFGSSQRQPYNKNNYLSGTNGPSSAAQDQGRGPSPFGMSGNTTNGGNSKRNSGCDLSATYYASRSPMYSPLDFSPPVFSPNHSQLQQARGYAANIPVVSNLMNPSMASVCEYQSHYPLFGLDWSADDYVCLGSYKEDSRNKLQVLHSNDLLSWESVVDADVVYPVSKIQWVPSQLYPRKLATCSDSLRIWSVSPEERQFQEQINLSLCKYNRQHPANPAAADDMKVIGTFPPITSFDWNTVDTNLIISSSIDTTCIVWDLQSSHYVKTQLIAHDSEVFDVRFLTKSTQLFASCGGDGSVRVFDLRSLAHSTIIYEPPSSSVSGATAGTITPSSKGSDALLRLEPSPYDPNVLATFAADSNKIIILDMRNPESPILNLQGHGSSVNGIKWHPTKRNVLLSCGDDCQVLYWDLNSSFMEINAAGSKSPSIHGTSLEDPDGDTEMTDGGAGSGLNEDPLSLNNNSKQVCKTLETPNMMYANKTQEINNIAWRPQRGDWFGCVSGKKFQNVRVL</sequence>
<dbReference type="EMBL" id="Z67751">
    <property type="protein sequence ID" value="CAA91597.1"/>
    <property type="molecule type" value="Genomic_DNA"/>
</dbReference>
<dbReference type="EMBL" id="Z73603">
    <property type="protein sequence ID" value="CAA97968.1"/>
    <property type="molecule type" value="Genomic_DNA"/>
</dbReference>
<dbReference type="EMBL" id="BK006949">
    <property type="protein sequence ID" value="DAA11190.1"/>
    <property type="molecule type" value="Genomic_DNA"/>
</dbReference>
<dbReference type="PIR" id="S61017">
    <property type="entry name" value="S61017"/>
</dbReference>
<dbReference type="RefSeq" id="NP_015077.1">
    <property type="nucleotide sequence ID" value="NM_001184061.1"/>
</dbReference>
<dbReference type="SMR" id="Q12523"/>
<dbReference type="BioGRID" id="35916">
    <property type="interactions" value="49"/>
</dbReference>
<dbReference type="DIP" id="DIP-6366N"/>
<dbReference type="FunCoup" id="Q12523">
    <property type="interactions" value="1041"/>
</dbReference>
<dbReference type="IntAct" id="Q12523">
    <property type="interactions" value="7"/>
</dbReference>
<dbReference type="MINT" id="Q12523"/>
<dbReference type="STRING" id="4932.YPL247C"/>
<dbReference type="iPTMnet" id="Q12523"/>
<dbReference type="PaxDb" id="4932-YPL247C"/>
<dbReference type="PeptideAtlas" id="Q12523"/>
<dbReference type="EnsemblFungi" id="YPL247C_mRNA">
    <property type="protein sequence ID" value="YPL247C"/>
    <property type="gene ID" value="YPL247C"/>
</dbReference>
<dbReference type="GeneID" id="855829"/>
<dbReference type="KEGG" id="sce:YPL247C"/>
<dbReference type="AGR" id="SGD:S000006168"/>
<dbReference type="SGD" id="S000006168">
    <property type="gene designation" value="YPL247C"/>
</dbReference>
<dbReference type="VEuPathDB" id="FungiDB:YPL247C"/>
<dbReference type="eggNOG" id="KOG0290">
    <property type="taxonomic scope" value="Eukaryota"/>
</dbReference>
<dbReference type="GeneTree" id="ENSGT00390000006939"/>
<dbReference type="HOGENOM" id="CLU_013694_4_0_1"/>
<dbReference type="InParanoid" id="Q12523"/>
<dbReference type="OMA" id="TIAMDAC"/>
<dbReference type="OrthoDB" id="1284551at2759"/>
<dbReference type="BioCyc" id="YEAST:G3O-34133-MONOMER"/>
<dbReference type="BioGRID-ORCS" id="855829">
    <property type="hits" value="3 hits in 10 CRISPR screens"/>
</dbReference>
<dbReference type="PRO" id="PR:Q12523"/>
<dbReference type="Proteomes" id="UP000002311">
    <property type="component" value="Chromosome XVI"/>
</dbReference>
<dbReference type="RNAct" id="Q12523">
    <property type="molecule type" value="protein"/>
</dbReference>
<dbReference type="GO" id="GO:0005737">
    <property type="term" value="C:cytoplasm"/>
    <property type="evidence" value="ECO:0007005"/>
    <property type="project" value="SGD"/>
</dbReference>
<dbReference type="GO" id="GO:0005634">
    <property type="term" value="C:nucleus"/>
    <property type="evidence" value="ECO:0007005"/>
    <property type="project" value="SGD"/>
</dbReference>
<dbReference type="FunFam" id="2.130.10.10:FF:001162">
    <property type="entry name" value="Conserved protein"/>
    <property type="match status" value="1"/>
</dbReference>
<dbReference type="Gene3D" id="2.130.10.10">
    <property type="entry name" value="YVTN repeat-like/Quinoprotein amine dehydrogenase"/>
    <property type="match status" value="1"/>
</dbReference>
<dbReference type="InterPro" id="IPR045159">
    <property type="entry name" value="DCAF7-like"/>
</dbReference>
<dbReference type="InterPro" id="IPR015943">
    <property type="entry name" value="WD40/YVTN_repeat-like_dom_sf"/>
</dbReference>
<dbReference type="InterPro" id="IPR036322">
    <property type="entry name" value="WD40_repeat_dom_sf"/>
</dbReference>
<dbReference type="InterPro" id="IPR001680">
    <property type="entry name" value="WD40_rpt"/>
</dbReference>
<dbReference type="PANTHER" id="PTHR19919">
    <property type="entry name" value="WD REPEAT CONTAINING PROTEIN"/>
    <property type="match status" value="1"/>
</dbReference>
<dbReference type="Pfam" id="PF00400">
    <property type="entry name" value="WD40"/>
    <property type="match status" value="3"/>
</dbReference>
<dbReference type="SMART" id="SM00320">
    <property type="entry name" value="WD40"/>
    <property type="match status" value="4"/>
</dbReference>
<dbReference type="SUPFAM" id="SSF50978">
    <property type="entry name" value="WD40 repeat-like"/>
    <property type="match status" value="1"/>
</dbReference>
<dbReference type="PROSITE" id="PS00678">
    <property type="entry name" value="WD_REPEATS_1"/>
    <property type="match status" value="1"/>
</dbReference>
<dbReference type="PROSITE" id="PS50082">
    <property type="entry name" value="WD_REPEATS_2"/>
    <property type="match status" value="2"/>
</dbReference>
<dbReference type="PROSITE" id="PS50294">
    <property type="entry name" value="WD_REPEATS_REGION"/>
    <property type="match status" value="1"/>
</dbReference>
<organism>
    <name type="scientific">Saccharomyces cerevisiae (strain ATCC 204508 / S288c)</name>
    <name type="common">Baker's yeast</name>
    <dbReference type="NCBI Taxonomy" id="559292"/>
    <lineage>
        <taxon>Eukaryota</taxon>
        <taxon>Fungi</taxon>
        <taxon>Dikarya</taxon>
        <taxon>Ascomycota</taxon>
        <taxon>Saccharomycotina</taxon>
        <taxon>Saccharomycetes</taxon>
        <taxon>Saccharomycetales</taxon>
        <taxon>Saccharomycetaceae</taxon>
        <taxon>Saccharomyces</taxon>
    </lineage>
</organism>
<feature type="chain" id="PRO_0000242490" description="WD repeat-containing protein YPL247C">
    <location>
        <begin position="1"/>
        <end position="523"/>
    </location>
</feature>
<feature type="repeat" description="WD 1">
    <location>
        <begin position="173"/>
        <end position="213"/>
    </location>
</feature>
<feature type="repeat" description="WD 2">
    <location>
        <begin position="241"/>
        <end position="281"/>
    </location>
</feature>
<feature type="repeat" description="WD 3">
    <location>
        <begin position="285"/>
        <end position="325"/>
    </location>
</feature>
<feature type="repeat" description="WD 4">
    <location>
        <begin position="392"/>
        <end position="432"/>
    </location>
</feature>
<feature type="region of interest" description="Disordered" evidence="1">
    <location>
        <begin position="1"/>
        <end position="64"/>
    </location>
</feature>
<feature type="region of interest" description="Disordered" evidence="1">
    <location>
        <begin position="436"/>
        <end position="472"/>
    </location>
</feature>
<feature type="compositionally biased region" description="Polar residues" evidence="1">
    <location>
        <begin position="9"/>
        <end position="40"/>
    </location>
</feature>
<feature type="compositionally biased region" description="Low complexity" evidence="1">
    <location>
        <begin position="52"/>
        <end position="64"/>
    </location>
</feature>
<feature type="modified residue" description="Phosphoserine" evidence="6">
    <location>
        <position position="47"/>
    </location>
</feature>
<feature type="modified residue" description="Phosphoserine" evidence="5 6 7">
    <location>
        <position position="65"/>
    </location>
</feature>
<name>YP247_YEAST</name>
<accession>Q12523</accession>
<accession>D6W3C4</accession>
<comment type="subcellular location">
    <subcellularLocation>
        <location evidence="2">Cytoplasm</location>
    </subcellularLocation>
    <subcellularLocation>
        <location evidence="2">Nucleus</location>
    </subcellularLocation>
</comment>
<comment type="miscellaneous">
    <text evidence="3">Present with 799 molecules/cell in log phase SD medium.</text>
</comment>
<comment type="similarity">
    <text evidence="4">Belongs to the WD repeat WDR68 family.</text>
</comment>
<keyword id="KW-0963">Cytoplasm</keyword>
<keyword id="KW-0539">Nucleus</keyword>
<keyword id="KW-0597">Phosphoprotein</keyword>
<keyword id="KW-1185">Reference proteome</keyword>
<keyword id="KW-0677">Repeat</keyword>
<keyword id="KW-0853">WD repeat</keyword>
<evidence type="ECO:0000256" key="1">
    <source>
        <dbReference type="SAM" id="MobiDB-lite"/>
    </source>
</evidence>
<evidence type="ECO:0000269" key="2">
    <source>
    </source>
</evidence>
<evidence type="ECO:0000269" key="3">
    <source>
    </source>
</evidence>
<evidence type="ECO:0000305" key="4"/>
<evidence type="ECO:0007744" key="5">
    <source>
    </source>
</evidence>
<evidence type="ECO:0007744" key="6">
    <source>
    </source>
</evidence>
<evidence type="ECO:0007744" key="7">
    <source>
    </source>
</evidence>